<gene>
    <name type="primary">OR4X2</name>
</gene>
<proteinExistence type="evidence at transcript level"/>
<reference key="1">
    <citation type="submission" date="2001-07" db="EMBL/GenBank/DDBJ databases">
        <title>Genome-wide discovery and analysis of human seven transmembrane helix receptor genes.</title>
        <authorList>
            <person name="Suwa M."/>
            <person name="Sato T."/>
            <person name="Okouchi I."/>
            <person name="Arita M."/>
            <person name="Futami K."/>
            <person name="Matsumoto S."/>
            <person name="Tsutsumi S."/>
            <person name="Aburatani H."/>
            <person name="Asai K."/>
            <person name="Akiyama Y."/>
        </authorList>
    </citation>
    <scope>NUCLEOTIDE SEQUENCE [GENOMIC DNA]</scope>
</reference>
<reference key="2">
    <citation type="submission" date="2005-09" db="EMBL/GenBank/DDBJ databases">
        <authorList>
            <person name="Mural R.J."/>
            <person name="Istrail S."/>
            <person name="Sutton G.G."/>
            <person name="Florea L."/>
            <person name="Halpern A.L."/>
            <person name="Mobarry C.M."/>
            <person name="Lippert R."/>
            <person name="Walenz B."/>
            <person name="Shatkay H."/>
            <person name="Dew I."/>
            <person name="Miller J.R."/>
            <person name="Flanigan M.J."/>
            <person name="Edwards N.J."/>
            <person name="Bolanos R."/>
            <person name="Fasulo D."/>
            <person name="Halldorsson B.V."/>
            <person name="Hannenhalli S."/>
            <person name="Turner R."/>
            <person name="Yooseph S."/>
            <person name="Lu F."/>
            <person name="Nusskern D.R."/>
            <person name="Shue B.C."/>
            <person name="Zheng X.H."/>
            <person name="Zhong F."/>
            <person name="Delcher A.L."/>
            <person name="Huson D.H."/>
            <person name="Kravitz S.A."/>
            <person name="Mouchard L."/>
            <person name="Reinert K."/>
            <person name="Remington K.A."/>
            <person name="Clark A.G."/>
            <person name="Waterman M.S."/>
            <person name="Eichler E.E."/>
            <person name="Adams M.D."/>
            <person name="Hunkapiller M.W."/>
            <person name="Myers E.W."/>
            <person name="Venter J.C."/>
        </authorList>
    </citation>
    <scope>NUCLEOTIDE SEQUENCE [LARGE SCALE GENOMIC DNA]</scope>
</reference>
<reference key="3">
    <citation type="journal article" date="2004" name="Genome Res.">
        <title>The status, quality, and expansion of the NIH full-length cDNA project: the Mammalian Gene Collection (MGC).</title>
        <authorList>
            <consortium name="The MGC Project Team"/>
        </authorList>
    </citation>
    <scope>NUCLEOTIDE SEQUENCE [LARGE SCALE MRNA]</scope>
</reference>
<reference key="4">
    <citation type="journal article" date="2002" name="Genomics">
        <title>DEFOG: a practical scheme for deciphering families of genes.</title>
        <authorList>
            <person name="Fuchs T."/>
            <person name="Malecova B."/>
            <person name="Linhart C."/>
            <person name="Sharan R."/>
            <person name="Khen M."/>
            <person name="Herwig R."/>
            <person name="Shmulevich D."/>
            <person name="Elkon R."/>
            <person name="Steinfath M."/>
            <person name="O'Brien J.K."/>
            <person name="Radelof U."/>
            <person name="Lehrach H."/>
            <person name="Lancet D."/>
            <person name="Shamir R."/>
        </authorList>
    </citation>
    <scope>NUCLEOTIDE SEQUENCE [GENOMIC DNA] OF 60-272</scope>
</reference>
<reference key="5">
    <citation type="journal article" date="2004" name="Proc. Natl. Acad. Sci. U.S.A.">
        <title>The human olfactory receptor gene family.</title>
        <authorList>
            <person name="Malnic B."/>
            <person name="Godfrey P.A."/>
            <person name="Buck L.B."/>
        </authorList>
    </citation>
    <scope>IDENTIFICATION</scope>
</reference>
<reference key="6">
    <citation type="journal article" date="2004" name="Proc. Natl. Acad. Sci. U.S.A.">
        <authorList>
            <person name="Malnic B."/>
            <person name="Godfrey P.A."/>
            <person name="Buck L.B."/>
        </authorList>
    </citation>
    <scope>ERRATUM OF PUBMED:14983052</scope>
</reference>
<reference key="7">
    <citation type="journal article" date="2007" name="PLoS Biol.">
        <title>Genetic elucidation of human hyperosmia to isovaleric acid.</title>
        <authorList>
            <person name="Menashe I."/>
            <person name="Abaffy T."/>
            <person name="Hasin Y."/>
            <person name="Goshen S."/>
            <person name="Yahalom V."/>
            <person name="Luetje C.W."/>
            <person name="Lancet D."/>
        </authorList>
    </citation>
    <scope>POLYMORPHISM</scope>
</reference>
<keyword id="KW-1003">Cell membrane</keyword>
<keyword id="KW-1015">Disulfide bond</keyword>
<keyword id="KW-0297">G-protein coupled receptor</keyword>
<keyword id="KW-0472">Membrane</keyword>
<keyword id="KW-0552">Olfaction</keyword>
<keyword id="KW-0675">Receptor</keyword>
<keyword id="KW-1185">Reference proteome</keyword>
<keyword id="KW-0716">Sensory transduction</keyword>
<keyword id="KW-0807">Transducer</keyword>
<keyword id="KW-0812">Transmembrane</keyword>
<keyword id="KW-1133">Transmembrane helix</keyword>
<evidence type="ECO:0000255" key="1"/>
<evidence type="ECO:0000255" key="2">
    <source>
        <dbReference type="PROSITE-ProRule" id="PRU00521"/>
    </source>
</evidence>
<evidence type="ECO:0000305" key="3"/>
<protein>
    <recommendedName>
        <fullName>Olfactory receptor 4X2</fullName>
    </recommendedName>
    <alternativeName>
        <fullName>Olfactory receptor OR11-105</fullName>
    </alternativeName>
</protein>
<feature type="chain" id="PRO_0000150571" description="Olfactory receptor 4X2">
    <location>
        <begin position="1"/>
        <end position="303"/>
    </location>
</feature>
<feature type="topological domain" description="Extracellular" evidence="1">
    <location>
        <begin position="1"/>
        <end position="17"/>
    </location>
</feature>
<feature type="transmembrane region" description="Helical; Name=1" evidence="1">
    <location>
        <begin position="18"/>
        <end position="41"/>
    </location>
</feature>
<feature type="topological domain" description="Cytoplasmic" evidence="1">
    <location>
        <begin position="42"/>
        <end position="49"/>
    </location>
</feature>
<feature type="transmembrane region" description="Helical; Name=2" evidence="1">
    <location>
        <begin position="50"/>
        <end position="71"/>
    </location>
</feature>
<feature type="topological domain" description="Extracellular" evidence="1">
    <location>
        <begin position="72"/>
        <end position="92"/>
    </location>
</feature>
<feature type="transmembrane region" description="Helical; Name=3" evidence="1">
    <location>
        <begin position="93"/>
        <end position="112"/>
    </location>
</feature>
<feature type="topological domain" description="Cytoplasmic" evidence="1">
    <location>
        <begin position="113"/>
        <end position="131"/>
    </location>
</feature>
<feature type="transmembrane region" description="Helical; Name=4" evidence="1">
    <location>
        <begin position="132"/>
        <end position="150"/>
    </location>
</feature>
<feature type="topological domain" description="Extracellular" evidence="1">
    <location>
        <begin position="151"/>
        <end position="187"/>
    </location>
</feature>
<feature type="transmembrane region" description="Helical; Name=5" evidence="1">
    <location>
        <begin position="188"/>
        <end position="211"/>
    </location>
</feature>
<feature type="topological domain" description="Cytoplasmic" evidence="1">
    <location>
        <begin position="212"/>
        <end position="227"/>
    </location>
</feature>
<feature type="transmembrane region" description="Helical; Name=6" evidence="1">
    <location>
        <begin position="228"/>
        <end position="250"/>
    </location>
</feature>
<feature type="topological domain" description="Extracellular" evidence="1">
    <location>
        <begin position="251"/>
        <end position="261"/>
    </location>
</feature>
<feature type="transmembrane region" description="Helical; Name=7" evidence="1">
    <location>
        <begin position="262"/>
        <end position="281"/>
    </location>
</feature>
<feature type="topological domain" description="Cytoplasmic" evidence="1">
    <location>
        <begin position="282"/>
        <end position="303"/>
    </location>
</feature>
<feature type="disulfide bond" evidence="2">
    <location>
        <begin position="89"/>
        <end position="181"/>
    </location>
</feature>
<organism>
    <name type="scientific">Homo sapiens</name>
    <name type="common">Human</name>
    <dbReference type="NCBI Taxonomy" id="9606"/>
    <lineage>
        <taxon>Eukaryota</taxon>
        <taxon>Metazoa</taxon>
        <taxon>Chordata</taxon>
        <taxon>Craniata</taxon>
        <taxon>Vertebrata</taxon>
        <taxon>Euteleostomi</taxon>
        <taxon>Mammalia</taxon>
        <taxon>Eutheria</taxon>
        <taxon>Euarchontoglires</taxon>
        <taxon>Primates</taxon>
        <taxon>Haplorrhini</taxon>
        <taxon>Catarrhini</taxon>
        <taxon>Hominidae</taxon>
        <taxon>Homo</taxon>
    </lineage>
</organism>
<dbReference type="EMBL" id="AB065847">
    <property type="protein sequence ID" value="BAC06065.1"/>
    <property type="molecule type" value="Genomic_DNA"/>
</dbReference>
<dbReference type="EMBL" id="CH471064">
    <property type="protein sequence ID" value="EAW67871.1"/>
    <property type="molecule type" value="Genomic_DNA"/>
</dbReference>
<dbReference type="EMBL" id="BC136935">
    <property type="protein sequence ID" value="AAI36936.1"/>
    <property type="molecule type" value="mRNA"/>
</dbReference>
<dbReference type="EMBL" id="BC136936">
    <property type="protein sequence ID" value="AAI36937.1"/>
    <property type="molecule type" value="mRNA"/>
</dbReference>
<dbReference type="EMBL" id="AF399580">
    <property type="protein sequence ID" value="AAK95065.1"/>
    <property type="molecule type" value="Genomic_DNA"/>
</dbReference>
<dbReference type="EMBL" id="BK004389">
    <property type="protein sequence ID" value="DAA04787.1"/>
    <property type="molecule type" value="Genomic_DNA"/>
</dbReference>
<dbReference type="RefSeq" id="NP_001004727.1">
    <property type="nucleotide sequence ID" value="NM_001004727.1"/>
</dbReference>
<dbReference type="SMR" id="Q8NGF9"/>
<dbReference type="BioGRID" id="125659">
    <property type="interactions" value="20"/>
</dbReference>
<dbReference type="FunCoup" id="Q8NGF9">
    <property type="interactions" value="417"/>
</dbReference>
<dbReference type="IntAct" id="Q8NGF9">
    <property type="interactions" value="4"/>
</dbReference>
<dbReference type="STRING" id="9606.ENSP00000485431"/>
<dbReference type="iPTMnet" id="Q8NGF9"/>
<dbReference type="PhosphoSitePlus" id="Q8NGF9"/>
<dbReference type="BioMuta" id="OR4X2"/>
<dbReference type="DMDM" id="38372683"/>
<dbReference type="MassIVE" id="Q8NGF9"/>
<dbReference type="PaxDb" id="9606-ENSP00000485191"/>
<dbReference type="Antibodypedia" id="80237">
    <property type="antibodies" value="74 antibodies from 17 providers"/>
</dbReference>
<dbReference type="DNASU" id="119764"/>
<dbReference type="Ensembl" id="ENST00000624868.2">
    <property type="protein sequence ID" value="ENSP00000485431.1"/>
    <property type="gene ID" value="ENSG00000172208.7"/>
</dbReference>
<dbReference type="GeneID" id="119764"/>
<dbReference type="KEGG" id="hsa:119764"/>
<dbReference type="MANE-Select" id="ENST00000624868.2">
    <property type="protein sequence ID" value="ENSP00000485431.1"/>
    <property type="RefSeq nucleotide sequence ID" value="NM_001004727.1"/>
    <property type="RefSeq protein sequence ID" value="NP_001004727.1"/>
</dbReference>
<dbReference type="UCSC" id="uc001ngs.1">
    <property type="organism name" value="human"/>
</dbReference>
<dbReference type="AGR" id="HGNC:15184"/>
<dbReference type="CTD" id="119764"/>
<dbReference type="DisGeNET" id="119764"/>
<dbReference type="GeneCards" id="OR4X2"/>
<dbReference type="HGNC" id="HGNC:15184">
    <property type="gene designation" value="OR4X2"/>
</dbReference>
<dbReference type="HPA" id="ENSG00000172208">
    <property type="expression patterns" value="Not detected"/>
</dbReference>
<dbReference type="neXtProt" id="NX_Q8NGF9"/>
<dbReference type="PharmGKB" id="PA32351"/>
<dbReference type="VEuPathDB" id="HostDB:ENSG00000172208"/>
<dbReference type="eggNOG" id="ENOG502SKRP">
    <property type="taxonomic scope" value="Eukaryota"/>
</dbReference>
<dbReference type="GeneTree" id="ENSGT00940000158345"/>
<dbReference type="HOGENOM" id="CLU_012526_1_0_1"/>
<dbReference type="InParanoid" id="Q8NGF9"/>
<dbReference type="OMA" id="ERKAMSW"/>
<dbReference type="OrthoDB" id="10017003at2759"/>
<dbReference type="PAN-GO" id="Q8NGF9">
    <property type="GO annotations" value="2 GO annotations based on evolutionary models"/>
</dbReference>
<dbReference type="PhylomeDB" id="Q8NGF9"/>
<dbReference type="TreeFam" id="TF337350"/>
<dbReference type="PathwayCommons" id="Q8NGF9"/>
<dbReference type="Reactome" id="R-HSA-9752946">
    <property type="pathway name" value="Expression and translocation of olfactory receptors"/>
</dbReference>
<dbReference type="BioGRID-ORCS" id="119764">
    <property type="hits" value="8 hits in 741 CRISPR screens"/>
</dbReference>
<dbReference type="GeneWiki" id="OR4X2"/>
<dbReference type="GenomeRNAi" id="119764"/>
<dbReference type="Pharos" id="Q8NGF9">
    <property type="development level" value="Tdark"/>
</dbReference>
<dbReference type="PRO" id="PR:Q8NGF9"/>
<dbReference type="Proteomes" id="UP000005640">
    <property type="component" value="Chromosome 11"/>
</dbReference>
<dbReference type="RNAct" id="Q8NGF9">
    <property type="molecule type" value="protein"/>
</dbReference>
<dbReference type="Bgee" id="ENSG00000172208">
    <property type="expression patterns" value="Expressed in granulocyte"/>
</dbReference>
<dbReference type="ExpressionAtlas" id="Q8NGF9">
    <property type="expression patterns" value="baseline and differential"/>
</dbReference>
<dbReference type="GO" id="GO:0005886">
    <property type="term" value="C:plasma membrane"/>
    <property type="evidence" value="ECO:0000318"/>
    <property type="project" value="GO_Central"/>
</dbReference>
<dbReference type="GO" id="GO:0004930">
    <property type="term" value="F:G protein-coupled receptor activity"/>
    <property type="evidence" value="ECO:0007669"/>
    <property type="project" value="UniProtKB-KW"/>
</dbReference>
<dbReference type="GO" id="GO:0004984">
    <property type="term" value="F:olfactory receptor activity"/>
    <property type="evidence" value="ECO:0000318"/>
    <property type="project" value="GO_Central"/>
</dbReference>
<dbReference type="CDD" id="cd15939">
    <property type="entry name" value="7tmA_OR4A-like"/>
    <property type="match status" value="1"/>
</dbReference>
<dbReference type="FunFam" id="1.10.1220.70:FF:000001">
    <property type="entry name" value="Olfactory receptor"/>
    <property type="match status" value="1"/>
</dbReference>
<dbReference type="FunFam" id="1.20.1070.10:FF:000007">
    <property type="entry name" value="Olfactory receptor"/>
    <property type="match status" value="1"/>
</dbReference>
<dbReference type="Gene3D" id="1.20.1070.10">
    <property type="entry name" value="Rhodopsin 7-helix transmembrane proteins"/>
    <property type="match status" value="1"/>
</dbReference>
<dbReference type="InterPro" id="IPR000276">
    <property type="entry name" value="GPCR_Rhodpsn"/>
</dbReference>
<dbReference type="InterPro" id="IPR017452">
    <property type="entry name" value="GPCR_Rhodpsn_7TM"/>
</dbReference>
<dbReference type="InterPro" id="IPR000725">
    <property type="entry name" value="Olfact_rcpt"/>
</dbReference>
<dbReference type="InterPro" id="IPR050427">
    <property type="entry name" value="Olfactory_Receptors"/>
</dbReference>
<dbReference type="PANTHER" id="PTHR48002">
    <property type="entry name" value="OLFACTORY RECEPTOR"/>
    <property type="match status" value="1"/>
</dbReference>
<dbReference type="Pfam" id="PF13853">
    <property type="entry name" value="7tm_4"/>
    <property type="match status" value="1"/>
</dbReference>
<dbReference type="PRINTS" id="PR00237">
    <property type="entry name" value="GPCRRHODOPSN"/>
</dbReference>
<dbReference type="PRINTS" id="PR00245">
    <property type="entry name" value="OLFACTORYR"/>
</dbReference>
<dbReference type="SUPFAM" id="SSF81321">
    <property type="entry name" value="Family A G protein-coupled receptor-like"/>
    <property type="match status" value="1"/>
</dbReference>
<dbReference type="PROSITE" id="PS50262">
    <property type="entry name" value="G_PROTEIN_RECEP_F1_2"/>
    <property type="match status" value="1"/>
</dbReference>
<accession>Q8NGF9</accession>
<accession>B2RNK3</accession>
<accession>Q6IF73</accession>
<accession>Q96R63</accession>
<comment type="function">
    <text evidence="3">Odorant receptor.</text>
</comment>
<comment type="subcellular location">
    <subcellularLocation>
        <location>Cell membrane</location>
        <topology>Multi-pass membrane protein</topology>
    </subcellularLocation>
</comment>
<comment type="polymorphism">
    <text>A stop codon in the gene coding for this protein at position Tyr-27 is responsible for functional diversity thus producing a pseudogene.</text>
</comment>
<comment type="similarity">
    <text evidence="2">Belongs to the G-protein coupled receptor 1 family.</text>
</comment>
<comment type="online information" name="Human Olfactory Receptor Data Exploratorium (HORDE)">
    <link uri="http://genome.weizmann.ac.il/horde/card/index/symbol:OR4X2"/>
</comment>
<sequence>MTEFIFLVLSPNQEVQRVCFVIFLFLYTAIVLGNFLIVLTVMTSRSLGSPMYFFLSYLSFMEICYSSATAPKLISDLLAERKVISWWGCMAQLFFLHFFGGTEIFLLTVMAYDHYVAICKPLSYTTIMNWQVCTVLVGIAWVGGFMHSFAQILLIFHLLFCGPNVINHYFCDLVPLLKLACSDTFLIGLLIVANGGTLSVISFGVLLASYMVILLHLRTWSSEGWCKALSTCGSHFAVVILFFGPCVFNSLRPSTTLPIDKMVAVFYTVITAILNPVIYSLRNAEMRKAMKRLWIRTLRLNEK</sequence>
<name>OR4X2_HUMAN</name>